<gene>
    <name evidence="2" type="primary">ddl</name>
    <name type="ordered locus">FTL_1910</name>
</gene>
<comment type="function">
    <text evidence="2">Cell wall formation.</text>
</comment>
<comment type="catalytic activity">
    <reaction evidence="2">
        <text>2 D-alanine + ATP = D-alanyl-D-alanine + ADP + phosphate + H(+)</text>
        <dbReference type="Rhea" id="RHEA:11224"/>
        <dbReference type="ChEBI" id="CHEBI:15378"/>
        <dbReference type="ChEBI" id="CHEBI:30616"/>
        <dbReference type="ChEBI" id="CHEBI:43474"/>
        <dbReference type="ChEBI" id="CHEBI:57416"/>
        <dbReference type="ChEBI" id="CHEBI:57822"/>
        <dbReference type="ChEBI" id="CHEBI:456216"/>
        <dbReference type="EC" id="6.3.2.4"/>
    </reaction>
</comment>
<comment type="cofactor">
    <cofactor evidence="1">
        <name>Mg(2+)</name>
        <dbReference type="ChEBI" id="CHEBI:18420"/>
    </cofactor>
    <cofactor evidence="1">
        <name>Mn(2+)</name>
        <dbReference type="ChEBI" id="CHEBI:29035"/>
    </cofactor>
    <text evidence="1">Binds 2 magnesium or manganese ions per subunit.</text>
</comment>
<comment type="pathway">
    <text evidence="2">Cell wall biogenesis; peptidoglycan biosynthesis.</text>
</comment>
<comment type="subcellular location">
    <subcellularLocation>
        <location evidence="2">Cytoplasm</location>
    </subcellularLocation>
</comment>
<comment type="similarity">
    <text evidence="2">Belongs to the D-alanine--D-alanine ligase family.</text>
</comment>
<reference key="1">
    <citation type="submission" date="2006-03" db="EMBL/GenBank/DDBJ databases">
        <title>Complete genome sequence of Francisella tularensis LVS (Live Vaccine Strain).</title>
        <authorList>
            <person name="Chain P."/>
            <person name="Larimer F."/>
            <person name="Land M."/>
            <person name="Stilwagen S."/>
            <person name="Larsson P."/>
            <person name="Bearden S."/>
            <person name="Chu M."/>
            <person name="Oyston P."/>
            <person name="Forsman M."/>
            <person name="Andersson S."/>
            <person name="Lindler L."/>
            <person name="Titball R."/>
            <person name="Garcia E."/>
        </authorList>
    </citation>
    <scope>NUCLEOTIDE SEQUENCE [LARGE SCALE GENOMIC DNA]</scope>
    <source>
        <strain>LVS</strain>
    </source>
</reference>
<dbReference type="EC" id="6.3.2.4" evidence="2"/>
<dbReference type="EMBL" id="AM233362">
    <property type="protein sequence ID" value="CAJ80349.1"/>
    <property type="molecule type" value="Genomic_DNA"/>
</dbReference>
<dbReference type="RefSeq" id="WP_011457550.1">
    <property type="nucleotide sequence ID" value="NZ_CP009694.1"/>
</dbReference>
<dbReference type="SMR" id="Q2A182"/>
<dbReference type="KEGG" id="ftl:FTL_1910"/>
<dbReference type="UniPathway" id="UPA00219"/>
<dbReference type="Proteomes" id="UP000001944">
    <property type="component" value="Chromosome"/>
</dbReference>
<dbReference type="GO" id="GO:0005737">
    <property type="term" value="C:cytoplasm"/>
    <property type="evidence" value="ECO:0007669"/>
    <property type="project" value="UniProtKB-SubCell"/>
</dbReference>
<dbReference type="GO" id="GO:0005524">
    <property type="term" value="F:ATP binding"/>
    <property type="evidence" value="ECO:0007669"/>
    <property type="project" value="UniProtKB-KW"/>
</dbReference>
<dbReference type="GO" id="GO:0008716">
    <property type="term" value="F:D-alanine-D-alanine ligase activity"/>
    <property type="evidence" value="ECO:0007669"/>
    <property type="project" value="UniProtKB-UniRule"/>
</dbReference>
<dbReference type="GO" id="GO:0046872">
    <property type="term" value="F:metal ion binding"/>
    <property type="evidence" value="ECO:0007669"/>
    <property type="project" value="UniProtKB-KW"/>
</dbReference>
<dbReference type="GO" id="GO:0071555">
    <property type="term" value="P:cell wall organization"/>
    <property type="evidence" value="ECO:0007669"/>
    <property type="project" value="UniProtKB-KW"/>
</dbReference>
<dbReference type="GO" id="GO:0009252">
    <property type="term" value="P:peptidoglycan biosynthetic process"/>
    <property type="evidence" value="ECO:0007669"/>
    <property type="project" value="UniProtKB-UniRule"/>
</dbReference>
<dbReference type="GO" id="GO:0008360">
    <property type="term" value="P:regulation of cell shape"/>
    <property type="evidence" value="ECO:0007669"/>
    <property type="project" value="UniProtKB-KW"/>
</dbReference>
<dbReference type="Gene3D" id="3.40.50.20">
    <property type="match status" value="1"/>
</dbReference>
<dbReference type="Gene3D" id="3.30.1490.20">
    <property type="entry name" value="ATP-grasp fold, A domain"/>
    <property type="match status" value="1"/>
</dbReference>
<dbReference type="Gene3D" id="3.30.470.20">
    <property type="entry name" value="ATP-grasp fold, B domain"/>
    <property type="match status" value="1"/>
</dbReference>
<dbReference type="HAMAP" id="MF_00047">
    <property type="entry name" value="Dala_Dala_lig"/>
    <property type="match status" value="1"/>
</dbReference>
<dbReference type="InterPro" id="IPR011761">
    <property type="entry name" value="ATP-grasp"/>
</dbReference>
<dbReference type="InterPro" id="IPR013815">
    <property type="entry name" value="ATP_grasp_subdomain_1"/>
</dbReference>
<dbReference type="InterPro" id="IPR000291">
    <property type="entry name" value="D-Ala_lig_Van_CS"/>
</dbReference>
<dbReference type="InterPro" id="IPR005905">
    <property type="entry name" value="D_ala_D_ala"/>
</dbReference>
<dbReference type="InterPro" id="IPR011095">
    <property type="entry name" value="Dala_Dala_lig_C"/>
</dbReference>
<dbReference type="InterPro" id="IPR016185">
    <property type="entry name" value="PreATP-grasp_dom_sf"/>
</dbReference>
<dbReference type="NCBIfam" id="TIGR01205">
    <property type="entry name" value="D_ala_D_alaTIGR"/>
    <property type="match status" value="1"/>
</dbReference>
<dbReference type="NCBIfam" id="NF002378">
    <property type="entry name" value="PRK01372.1"/>
    <property type="match status" value="1"/>
</dbReference>
<dbReference type="NCBIfam" id="NF011167">
    <property type="entry name" value="PRK14569.1"/>
    <property type="match status" value="1"/>
</dbReference>
<dbReference type="PANTHER" id="PTHR23132">
    <property type="entry name" value="D-ALANINE--D-ALANINE LIGASE"/>
    <property type="match status" value="1"/>
</dbReference>
<dbReference type="PANTHER" id="PTHR23132:SF23">
    <property type="entry name" value="D-ALANINE--D-ALANINE LIGASE B"/>
    <property type="match status" value="1"/>
</dbReference>
<dbReference type="Pfam" id="PF07478">
    <property type="entry name" value="Dala_Dala_lig_C"/>
    <property type="match status" value="1"/>
</dbReference>
<dbReference type="PIRSF" id="PIRSF039102">
    <property type="entry name" value="Ddl/VanB"/>
    <property type="match status" value="1"/>
</dbReference>
<dbReference type="SUPFAM" id="SSF56059">
    <property type="entry name" value="Glutathione synthetase ATP-binding domain-like"/>
    <property type="match status" value="1"/>
</dbReference>
<dbReference type="SUPFAM" id="SSF52440">
    <property type="entry name" value="PreATP-grasp domain"/>
    <property type="match status" value="1"/>
</dbReference>
<dbReference type="PROSITE" id="PS50975">
    <property type="entry name" value="ATP_GRASP"/>
    <property type="match status" value="1"/>
</dbReference>
<dbReference type="PROSITE" id="PS00843">
    <property type="entry name" value="DALA_DALA_LIGASE_1"/>
    <property type="match status" value="1"/>
</dbReference>
<dbReference type="PROSITE" id="PS00844">
    <property type="entry name" value="DALA_DALA_LIGASE_2"/>
    <property type="match status" value="1"/>
</dbReference>
<sequence>MKNEKIVVLYGGDSPEREVSLKSGKAVLDSLISQGYDAVGVDASGKELVAKLLELKPDKCFVALHGEDGENGRVSALLEMLEIKHTSSSMKSSVITMDKMISKEILMHHRMPTPMAKFLTDKLVAEDEISFPAAVKPSSGGSSIATFKVKSIQELKHAYEEASKYGEVMIEQWVTGKEITVAIVNDEVYSSVWIEPQNEFYDYESKYSGKSIYHSPSGLCEQKELEVRQLAKKAYDLLGCSGHARVDFIYDDRGNFYIMEINSSPGMTDNSLSPKSAAAEGVDFDSFVKRIIEQAQ</sequence>
<evidence type="ECO:0000250" key="1"/>
<evidence type="ECO:0000255" key="2">
    <source>
        <dbReference type="HAMAP-Rule" id="MF_00047"/>
    </source>
</evidence>
<name>DDL_FRATH</name>
<proteinExistence type="inferred from homology"/>
<accession>Q2A182</accession>
<protein>
    <recommendedName>
        <fullName evidence="2">D-alanine--D-alanine ligase</fullName>
        <ecNumber evidence="2">6.3.2.4</ecNumber>
    </recommendedName>
    <alternativeName>
        <fullName evidence="2">D-Ala-D-Ala ligase</fullName>
    </alternativeName>
    <alternativeName>
        <fullName evidence="2">D-alanylalanine synthetase</fullName>
    </alternativeName>
</protein>
<keyword id="KW-0067">ATP-binding</keyword>
<keyword id="KW-0133">Cell shape</keyword>
<keyword id="KW-0961">Cell wall biogenesis/degradation</keyword>
<keyword id="KW-0963">Cytoplasm</keyword>
<keyword id="KW-0436">Ligase</keyword>
<keyword id="KW-0460">Magnesium</keyword>
<keyword id="KW-0464">Manganese</keyword>
<keyword id="KW-0479">Metal-binding</keyword>
<keyword id="KW-0547">Nucleotide-binding</keyword>
<keyword id="KW-0573">Peptidoglycan synthesis</keyword>
<keyword id="KW-1185">Reference proteome</keyword>
<feature type="chain" id="PRO_0000341095" description="D-alanine--D-alanine ligase">
    <location>
        <begin position="1"/>
        <end position="296"/>
    </location>
</feature>
<feature type="domain" description="ATP-grasp" evidence="2">
    <location>
        <begin position="103"/>
        <end position="293"/>
    </location>
</feature>
<feature type="binding site" evidence="2">
    <location>
        <begin position="129"/>
        <end position="180"/>
    </location>
    <ligand>
        <name>ATP</name>
        <dbReference type="ChEBI" id="CHEBI:30616"/>
    </ligand>
</feature>
<feature type="binding site" evidence="2">
    <location>
        <position position="247"/>
    </location>
    <ligand>
        <name>Mg(2+)</name>
        <dbReference type="ChEBI" id="CHEBI:18420"/>
        <label>1</label>
    </ligand>
</feature>
<feature type="binding site" evidence="2">
    <location>
        <position position="260"/>
    </location>
    <ligand>
        <name>Mg(2+)</name>
        <dbReference type="ChEBI" id="CHEBI:18420"/>
        <label>1</label>
    </ligand>
</feature>
<feature type="binding site" evidence="2">
    <location>
        <position position="260"/>
    </location>
    <ligand>
        <name>Mg(2+)</name>
        <dbReference type="ChEBI" id="CHEBI:18420"/>
        <label>2</label>
    </ligand>
</feature>
<feature type="binding site" evidence="2">
    <location>
        <position position="262"/>
    </location>
    <ligand>
        <name>Mg(2+)</name>
        <dbReference type="ChEBI" id="CHEBI:18420"/>
        <label>2</label>
    </ligand>
</feature>
<organism>
    <name type="scientific">Francisella tularensis subsp. holarctica (strain LVS)</name>
    <dbReference type="NCBI Taxonomy" id="376619"/>
    <lineage>
        <taxon>Bacteria</taxon>
        <taxon>Pseudomonadati</taxon>
        <taxon>Pseudomonadota</taxon>
        <taxon>Gammaproteobacteria</taxon>
        <taxon>Thiotrichales</taxon>
        <taxon>Francisellaceae</taxon>
        <taxon>Francisella</taxon>
    </lineage>
</organism>